<protein>
    <recommendedName>
        <fullName>Alanine carboxypeptidase</fullName>
        <ecNumber>3.4.17.6</ecNumber>
    </recommendedName>
</protein>
<proteinExistence type="evidence at protein level"/>
<sequence>KAWFVLSMRAVGGLFVDLWTSVAKTVKGWL</sequence>
<reference key="1">
    <citation type="journal article" date="1981" name="J. Biol. Chem.">
        <title>Primary structure of the COOH-terminal membranous segment of a penicillin-sensitive enzyme purified from two Bacilli.</title>
        <authorList>
            <person name="Waxman D.J."/>
            <person name="Strominger J.L."/>
        </authorList>
    </citation>
    <scope>PROTEIN SEQUENCE</scope>
</reference>
<dbReference type="EC" id="3.4.17.6"/>
<dbReference type="GO" id="GO:0004181">
    <property type="term" value="F:metallocarboxypeptidase activity"/>
    <property type="evidence" value="ECO:0007669"/>
    <property type="project" value="UniProtKB-EC"/>
</dbReference>
<dbReference type="GO" id="GO:0006508">
    <property type="term" value="P:proteolysis"/>
    <property type="evidence" value="ECO:0007669"/>
    <property type="project" value="UniProtKB-KW"/>
</dbReference>
<name>CBAL_GEOSE</name>
<organism>
    <name type="scientific">Geobacillus stearothermophilus</name>
    <name type="common">Bacillus stearothermophilus</name>
    <dbReference type="NCBI Taxonomy" id="1422"/>
    <lineage>
        <taxon>Bacteria</taxon>
        <taxon>Bacillati</taxon>
        <taxon>Bacillota</taxon>
        <taxon>Bacilli</taxon>
        <taxon>Bacillales</taxon>
        <taxon>Anoxybacillaceae</taxon>
        <taxon>Geobacillus</taxon>
    </lineage>
</organism>
<feature type="chain" id="PRO_0000089366" description="Alanine carboxypeptidase">
    <location>
        <begin position="1" status="less than"/>
        <end position="30"/>
    </location>
</feature>
<feature type="non-terminal residue">
    <location>
        <position position="1"/>
    </location>
</feature>
<comment type="catalytic activity">
    <reaction>
        <text>Release of a C-terminal alanine from a peptide or a variety of pteroyl or acyl groups.</text>
        <dbReference type="EC" id="3.4.17.6"/>
    </reaction>
</comment>
<keyword id="KW-0121">Carboxypeptidase</keyword>
<keyword id="KW-0903">Direct protein sequencing</keyword>
<keyword id="KW-0378">Hydrolase</keyword>
<keyword id="KW-0645">Protease</keyword>
<accession>P13722</accession>